<organism>
    <name type="scientific">Pseudomonas fluorescens (strain SBW25)</name>
    <dbReference type="NCBI Taxonomy" id="216595"/>
    <lineage>
        <taxon>Bacteria</taxon>
        <taxon>Pseudomonadati</taxon>
        <taxon>Pseudomonadota</taxon>
        <taxon>Gammaproteobacteria</taxon>
        <taxon>Pseudomonadales</taxon>
        <taxon>Pseudomonadaceae</taxon>
        <taxon>Pseudomonas</taxon>
    </lineage>
</organism>
<dbReference type="EC" id="2.7.7.60" evidence="1"/>
<dbReference type="EMBL" id="AM181176">
    <property type="protein sequence ID" value="CAY47549.1"/>
    <property type="molecule type" value="Genomic_DNA"/>
</dbReference>
<dbReference type="RefSeq" id="WP_012722610.1">
    <property type="nucleotide sequence ID" value="NC_012660.1"/>
</dbReference>
<dbReference type="SMR" id="C3K6H8"/>
<dbReference type="STRING" id="294.SRM1_01151"/>
<dbReference type="GeneID" id="93462908"/>
<dbReference type="PATRIC" id="fig|216595.4.peg.1524"/>
<dbReference type="eggNOG" id="COG1211">
    <property type="taxonomic scope" value="Bacteria"/>
</dbReference>
<dbReference type="HOGENOM" id="CLU_061281_3_1_6"/>
<dbReference type="OrthoDB" id="9806837at2"/>
<dbReference type="UniPathway" id="UPA00056">
    <property type="reaction ID" value="UER00093"/>
</dbReference>
<dbReference type="GO" id="GO:0050518">
    <property type="term" value="F:2-C-methyl-D-erythritol 4-phosphate cytidylyltransferase activity"/>
    <property type="evidence" value="ECO:0007669"/>
    <property type="project" value="UniProtKB-UniRule"/>
</dbReference>
<dbReference type="GO" id="GO:0019288">
    <property type="term" value="P:isopentenyl diphosphate biosynthetic process, methylerythritol 4-phosphate pathway"/>
    <property type="evidence" value="ECO:0007669"/>
    <property type="project" value="UniProtKB-UniRule"/>
</dbReference>
<dbReference type="CDD" id="cd02516">
    <property type="entry name" value="CDP-ME_synthetase"/>
    <property type="match status" value="1"/>
</dbReference>
<dbReference type="FunFam" id="3.90.550.10:FF:000003">
    <property type="entry name" value="2-C-methyl-D-erythritol 4-phosphate cytidylyltransferase"/>
    <property type="match status" value="1"/>
</dbReference>
<dbReference type="Gene3D" id="3.90.550.10">
    <property type="entry name" value="Spore Coat Polysaccharide Biosynthesis Protein SpsA, Chain A"/>
    <property type="match status" value="1"/>
</dbReference>
<dbReference type="HAMAP" id="MF_00108">
    <property type="entry name" value="IspD"/>
    <property type="match status" value="1"/>
</dbReference>
<dbReference type="InterPro" id="IPR001228">
    <property type="entry name" value="IspD"/>
</dbReference>
<dbReference type="InterPro" id="IPR034683">
    <property type="entry name" value="IspD/TarI"/>
</dbReference>
<dbReference type="InterPro" id="IPR050088">
    <property type="entry name" value="IspD/TarI_cytidylyltransf_bact"/>
</dbReference>
<dbReference type="InterPro" id="IPR018294">
    <property type="entry name" value="ISPD_synthase_CS"/>
</dbReference>
<dbReference type="InterPro" id="IPR029044">
    <property type="entry name" value="Nucleotide-diphossugar_trans"/>
</dbReference>
<dbReference type="NCBIfam" id="TIGR00453">
    <property type="entry name" value="ispD"/>
    <property type="match status" value="1"/>
</dbReference>
<dbReference type="PANTHER" id="PTHR32125">
    <property type="entry name" value="2-C-METHYL-D-ERYTHRITOL 4-PHOSPHATE CYTIDYLYLTRANSFERASE, CHLOROPLASTIC"/>
    <property type="match status" value="1"/>
</dbReference>
<dbReference type="PANTHER" id="PTHR32125:SF4">
    <property type="entry name" value="2-C-METHYL-D-ERYTHRITOL 4-PHOSPHATE CYTIDYLYLTRANSFERASE, CHLOROPLASTIC"/>
    <property type="match status" value="1"/>
</dbReference>
<dbReference type="Pfam" id="PF01128">
    <property type="entry name" value="IspD"/>
    <property type="match status" value="1"/>
</dbReference>
<dbReference type="SUPFAM" id="SSF53448">
    <property type="entry name" value="Nucleotide-diphospho-sugar transferases"/>
    <property type="match status" value="1"/>
</dbReference>
<dbReference type="PROSITE" id="PS01295">
    <property type="entry name" value="ISPD"/>
    <property type="match status" value="1"/>
</dbReference>
<feature type="chain" id="PRO_1000202895" description="2-C-methyl-D-erythritol 4-phosphate cytidylyltransferase">
    <location>
        <begin position="1"/>
        <end position="235"/>
    </location>
</feature>
<feature type="site" description="Transition state stabilizer" evidence="1">
    <location>
        <position position="20"/>
    </location>
</feature>
<feature type="site" description="Transition state stabilizer" evidence="1">
    <location>
        <position position="27"/>
    </location>
</feature>
<feature type="site" description="Positions MEP for the nucleophilic attack" evidence="1">
    <location>
        <position position="161"/>
    </location>
</feature>
<feature type="site" description="Positions MEP for the nucleophilic attack" evidence="1">
    <location>
        <position position="217"/>
    </location>
</feature>
<name>ISPD_PSEFS</name>
<keyword id="KW-0414">Isoprene biosynthesis</keyword>
<keyword id="KW-0548">Nucleotidyltransferase</keyword>
<keyword id="KW-0808">Transferase</keyword>
<sequence>MSERLPAFWAVIPAAGVGARMAADRPKQYLQLGGRTILEHSLGCFLDHPSLKGLVVSLAADDPYWPSLACAADPRIQRAEGGSERSGSVLNALLQLNALGAGDDDWVLVHDAARPNLSRDDLDKLLAELADDPVGGLLAVPARDTLKRVDKYGRVIETVDRSLIWQAYTPQMFRLGALHRALADSLVADAVITDEASAMEWSGQAPRLIEGRSDNIKVTRPEDLEWLRLRWANRR</sequence>
<evidence type="ECO:0000255" key="1">
    <source>
        <dbReference type="HAMAP-Rule" id="MF_00108"/>
    </source>
</evidence>
<protein>
    <recommendedName>
        <fullName evidence="1">2-C-methyl-D-erythritol 4-phosphate cytidylyltransferase</fullName>
        <ecNumber evidence="1">2.7.7.60</ecNumber>
    </recommendedName>
    <alternativeName>
        <fullName evidence="1">4-diphosphocytidyl-2C-methyl-D-erythritol synthase</fullName>
    </alternativeName>
    <alternativeName>
        <fullName evidence="1">MEP cytidylyltransferase</fullName>
        <shortName evidence="1">MCT</shortName>
    </alternativeName>
</protein>
<gene>
    <name evidence="1" type="primary">ispD</name>
    <name type="ordered locus">PFLU_1293</name>
</gene>
<reference key="1">
    <citation type="journal article" date="2009" name="Genome Biol.">
        <title>Genomic and genetic analyses of diversity and plant interactions of Pseudomonas fluorescens.</title>
        <authorList>
            <person name="Silby M.W."/>
            <person name="Cerdeno-Tarraga A.M."/>
            <person name="Vernikos G.S."/>
            <person name="Giddens S.R."/>
            <person name="Jackson R.W."/>
            <person name="Preston G.M."/>
            <person name="Zhang X.-X."/>
            <person name="Moon C.D."/>
            <person name="Gehrig S.M."/>
            <person name="Godfrey S.A.C."/>
            <person name="Knight C.G."/>
            <person name="Malone J.G."/>
            <person name="Robinson Z."/>
            <person name="Spiers A.J."/>
            <person name="Harris S."/>
            <person name="Challis G.L."/>
            <person name="Yaxley A.M."/>
            <person name="Harris D."/>
            <person name="Seeger K."/>
            <person name="Murphy L."/>
            <person name="Rutter S."/>
            <person name="Squares R."/>
            <person name="Quail M.A."/>
            <person name="Saunders E."/>
            <person name="Mavromatis K."/>
            <person name="Brettin T.S."/>
            <person name="Bentley S.D."/>
            <person name="Hothersall J."/>
            <person name="Stephens E."/>
            <person name="Thomas C.M."/>
            <person name="Parkhill J."/>
            <person name="Levy S.B."/>
            <person name="Rainey P.B."/>
            <person name="Thomson N.R."/>
        </authorList>
    </citation>
    <scope>NUCLEOTIDE SEQUENCE [LARGE SCALE GENOMIC DNA]</scope>
    <source>
        <strain>SBW25</strain>
    </source>
</reference>
<comment type="function">
    <text evidence="1">Catalyzes the formation of 4-diphosphocytidyl-2-C-methyl-D-erythritol from CTP and 2-C-methyl-D-erythritol 4-phosphate (MEP).</text>
</comment>
<comment type="catalytic activity">
    <reaction evidence="1">
        <text>2-C-methyl-D-erythritol 4-phosphate + CTP + H(+) = 4-CDP-2-C-methyl-D-erythritol + diphosphate</text>
        <dbReference type="Rhea" id="RHEA:13429"/>
        <dbReference type="ChEBI" id="CHEBI:15378"/>
        <dbReference type="ChEBI" id="CHEBI:33019"/>
        <dbReference type="ChEBI" id="CHEBI:37563"/>
        <dbReference type="ChEBI" id="CHEBI:57823"/>
        <dbReference type="ChEBI" id="CHEBI:58262"/>
        <dbReference type="EC" id="2.7.7.60"/>
    </reaction>
</comment>
<comment type="pathway">
    <text evidence="1">Isoprenoid biosynthesis; isopentenyl diphosphate biosynthesis via DXP pathway; isopentenyl diphosphate from 1-deoxy-D-xylulose 5-phosphate: step 2/6.</text>
</comment>
<comment type="similarity">
    <text evidence="1">Belongs to the IspD/TarI cytidylyltransferase family. IspD subfamily.</text>
</comment>
<proteinExistence type="inferred from homology"/>
<accession>C3K6H8</accession>